<evidence type="ECO:0000250" key="1"/>
<evidence type="ECO:0000255" key="2"/>
<evidence type="ECO:0000269" key="3">
    <source>
    </source>
</evidence>
<evidence type="ECO:0000305" key="4"/>
<comment type="function">
    <text evidence="1">Probable carboxypeptidase.</text>
</comment>
<comment type="subcellular location">
    <subcellularLocation>
        <location evidence="4">Secreted</location>
    </subcellularLocation>
</comment>
<comment type="tissue specificity">
    <text evidence="3">Ubiquitous.</text>
</comment>
<comment type="similarity">
    <text evidence="4">Belongs to the peptidase S10 family.</text>
</comment>
<comment type="sequence caution" evidence="4">
    <conflict type="erroneous gene model prediction">
        <sequence resource="EMBL-CDS" id="AAG51475"/>
    </conflict>
</comment>
<organism>
    <name type="scientific">Arabidopsis thaliana</name>
    <name type="common">Mouse-ear cress</name>
    <dbReference type="NCBI Taxonomy" id="3702"/>
    <lineage>
        <taxon>Eukaryota</taxon>
        <taxon>Viridiplantae</taxon>
        <taxon>Streptophyta</taxon>
        <taxon>Embryophyta</taxon>
        <taxon>Tracheophyta</taxon>
        <taxon>Spermatophyta</taxon>
        <taxon>Magnoliopsida</taxon>
        <taxon>eudicotyledons</taxon>
        <taxon>Gunneridae</taxon>
        <taxon>Pentapetalae</taxon>
        <taxon>rosids</taxon>
        <taxon>malvids</taxon>
        <taxon>Brassicales</taxon>
        <taxon>Brassicaceae</taxon>
        <taxon>Camelineae</taxon>
        <taxon>Arabidopsis</taxon>
    </lineage>
</organism>
<gene>
    <name type="primary">SCPL45</name>
    <name type="ordered locus">At1g28110</name>
    <name type="ORF">F13K9.20</name>
</gene>
<accession>Q93Y09</accession>
<accession>Q9C7E2</accession>
<feature type="signal peptide" evidence="2">
    <location>
        <begin position="1"/>
        <end position="24"/>
    </location>
</feature>
<feature type="chain" id="PRO_0000274660" description="Serine carboxypeptidase-like 45">
    <location>
        <begin position="25"/>
        <end position="461"/>
    </location>
</feature>
<feature type="active site" evidence="1">
    <location>
        <position position="177"/>
    </location>
</feature>
<feature type="active site" evidence="1">
    <location>
        <position position="377"/>
    </location>
</feature>
<feature type="active site" evidence="1">
    <location>
        <position position="434"/>
    </location>
</feature>
<feature type="glycosylation site" description="N-linked (GlcNAc...) asparagine" evidence="2">
    <location>
        <position position="168"/>
    </location>
</feature>
<feature type="glycosylation site" description="N-linked (GlcNAc...) asparagine" evidence="2">
    <location>
        <position position="244"/>
    </location>
</feature>
<feature type="disulfide bond" evidence="1">
    <location>
        <begin position="86"/>
        <end position="340"/>
    </location>
</feature>
<feature type="disulfide bond" evidence="1">
    <location>
        <begin position="243"/>
        <end position="261"/>
    </location>
</feature>
<feature type="disulfide bond" evidence="1">
    <location>
        <begin position="286"/>
        <end position="309"/>
    </location>
</feature>
<sequence length="461" mass="51803">MSPLQWLTISFALIIFHSLTVSSSVLSHSDRVTRLPGQPRVGFQQYSGYVTVDDKKQRALFYYFAEAETNPSSKPLVLWLNGGPGCSSLGVGAFSENGPFRPKGPILVKNQHSWNQEANMLYLETPVGVGFSYSTQSSHYEGVNDKITARDNLVFLQRWFLKFPHYLNRSLFITGESYAGHYVPQLAELMIQYNKKHHLFNLRGIAIGNPVLEFATDFNSRAEYFWSHGLISDSTYKMFTSYCNYSRYVSEYYRGSMSSMCSKVMSQVSTETSRFVDKYDVTLDVCIPSVLSQSKVVSPNQVGESVDVCVEDETVNYLNRRDVQEALHARLIGVREWTVCSNVLDYQLLDVEIPTINIVGSLVKAGVPVLVYSGDQDSVIPLTGSRTLVSRLAKQLGLRTSVPYRVWFAGQQVGGWTQVYGNVLSFATVRGASHEVPFSQPERSLVLFKAFLDGHPLPEEF</sequence>
<dbReference type="EC" id="3.4.16.-"/>
<dbReference type="EMBL" id="AC069471">
    <property type="protein sequence ID" value="AAG51475.1"/>
    <property type="status" value="ALT_SEQ"/>
    <property type="molecule type" value="Genomic_DNA"/>
</dbReference>
<dbReference type="EMBL" id="CP002684">
    <property type="protein sequence ID" value="AEE30918.1"/>
    <property type="molecule type" value="Genomic_DNA"/>
</dbReference>
<dbReference type="EMBL" id="CP002684">
    <property type="protein sequence ID" value="AEE30919.1"/>
    <property type="molecule type" value="Genomic_DNA"/>
</dbReference>
<dbReference type="EMBL" id="AY059854">
    <property type="protein sequence ID" value="AAL24336.1"/>
    <property type="molecule type" value="mRNA"/>
</dbReference>
<dbReference type="EMBL" id="BT008763">
    <property type="protein sequence ID" value="AAP49525.1"/>
    <property type="molecule type" value="mRNA"/>
</dbReference>
<dbReference type="PIR" id="H86406">
    <property type="entry name" value="H86406"/>
</dbReference>
<dbReference type="RefSeq" id="NP_564298.1">
    <property type="nucleotide sequence ID" value="NM_102576.2"/>
</dbReference>
<dbReference type="RefSeq" id="NP_973926.1">
    <property type="nucleotide sequence ID" value="NM_202197.2"/>
</dbReference>
<dbReference type="SMR" id="Q93Y09"/>
<dbReference type="FunCoup" id="Q93Y09">
    <property type="interactions" value="139"/>
</dbReference>
<dbReference type="STRING" id="3702.Q93Y09"/>
<dbReference type="ESTHER" id="arath-SCP45">
    <property type="family name" value="Carboxypeptidase_S10"/>
</dbReference>
<dbReference type="MEROPS" id="S10.A24"/>
<dbReference type="GlyCosmos" id="Q93Y09">
    <property type="glycosylation" value="2 sites, No reported glycans"/>
</dbReference>
<dbReference type="GlyGen" id="Q93Y09">
    <property type="glycosylation" value="2 sites"/>
</dbReference>
<dbReference type="iPTMnet" id="Q93Y09"/>
<dbReference type="PaxDb" id="3702-AT1G28110.2"/>
<dbReference type="ProteomicsDB" id="232942"/>
<dbReference type="EnsemblPlants" id="AT1G28110.1">
    <property type="protein sequence ID" value="AT1G28110.1"/>
    <property type="gene ID" value="AT1G28110"/>
</dbReference>
<dbReference type="EnsemblPlants" id="AT1G28110.2">
    <property type="protein sequence ID" value="AT1G28110.2"/>
    <property type="gene ID" value="AT1G28110"/>
</dbReference>
<dbReference type="GeneID" id="839704"/>
<dbReference type="Gramene" id="AT1G28110.1">
    <property type="protein sequence ID" value="AT1G28110.1"/>
    <property type="gene ID" value="AT1G28110"/>
</dbReference>
<dbReference type="Gramene" id="AT1G28110.2">
    <property type="protein sequence ID" value="AT1G28110.2"/>
    <property type="gene ID" value="AT1G28110"/>
</dbReference>
<dbReference type="KEGG" id="ath:AT1G28110"/>
<dbReference type="Araport" id="AT1G28110"/>
<dbReference type="TAIR" id="AT1G28110">
    <property type="gene designation" value="SCPL45"/>
</dbReference>
<dbReference type="eggNOG" id="KOG1282">
    <property type="taxonomic scope" value="Eukaryota"/>
</dbReference>
<dbReference type="HOGENOM" id="CLU_008523_13_1_1"/>
<dbReference type="InParanoid" id="Q93Y09"/>
<dbReference type="OMA" id="VANKLWV"/>
<dbReference type="PhylomeDB" id="Q93Y09"/>
<dbReference type="CD-CODE" id="4299E36E">
    <property type="entry name" value="Nucleolus"/>
</dbReference>
<dbReference type="PRO" id="PR:Q93Y09"/>
<dbReference type="Proteomes" id="UP000006548">
    <property type="component" value="Chromosome 1"/>
</dbReference>
<dbReference type="ExpressionAtlas" id="Q93Y09">
    <property type="expression patterns" value="baseline and differential"/>
</dbReference>
<dbReference type="GO" id="GO:0005576">
    <property type="term" value="C:extracellular region"/>
    <property type="evidence" value="ECO:0007669"/>
    <property type="project" value="UniProtKB-SubCell"/>
</dbReference>
<dbReference type="GO" id="GO:0009505">
    <property type="term" value="C:plant-type cell wall"/>
    <property type="evidence" value="ECO:0007005"/>
    <property type="project" value="TAIR"/>
</dbReference>
<dbReference type="GO" id="GO:0009506">
    <property type="term" value="C:plasmodesma"/>
    <property type="evidence" value="ECO:0007005"/>
    <property type="project" value="TAIR"/>
</dbReference>
<dbReference type="GO" id="GO:0004185">
    <property type="term" value="F:serine-type carboxypeptidase activity"/>
    <property type="evidence" value="ECO:0007669"/>
    <property type="project" value="InterPro"/>
</dbReference>
<dbReference type="GO" id="GO:0006508">
    <property type="term" value="P:proteolysis"/>
    <property type="evidence" value="ECO:0007669"/>
    <property type="project" value="UniProtKB-KW"/>
</dbReference>
<dbReference type="FunFam" id="3.40.50.11320:FF:000004">
    <property type="entry name" value="Carboxypeptidase"/>
    <property type="match status" value="1"/>
</dbReference>
<dbReference type="FunFam" id="3.40.50.1820:FF:000453">
    <property type="entry name" value="Carboxypeptidase"/>
    <property type="match status" value="1"/>
</dbReference>
<dbReference type="Gene3D" id="3.40.50.11320">
    <property type="match status" value="1"/>
</dbReference>
<dbReference type="Gene3D" id="6.10.250.940">
    <property type="match status" value="1"/>
</dbReference>
<dbReference type="Gene3D" id="3.40.50.1820">
    <property type="entry name" value="alpha/beta hydrolase"/>
    <property type="match status" value="1"/>
</dbReference>
<dbReference type="InterPro" id="IPR029058">
    <property type="entry name" value="AB_hydrolase_fold"/>
</dbReference>
<dbReference type="InterPro" id="IPR001563">
    <property type="entry name" value="Peptidase_S10"/>
</dbReference>
<dbReference type="InterPro" id="IPR033124">
    <property type="entry name" value="Ser_caboxypep_his_AS"/>
</dbReference>
<dbReference type="InterPro" id="IPR018202">
    <property type="entry name" value="Ser_caboxypep_ser_AS"/>
</dbReference>
<dbReference type="PANTHER" id="PTHR11802:SF500">
    <property type="entry name" value="SERINE CARBOXYPEPTIDASE-LIKE 45"/>
    <property type="match status" value="1"/>
</dbReference>
<dbReference type="PANTHER" id="PTHR11802">
    <property type="entry name" value="SERINE PROTEASE FAMILY S10 SERINE CARBOXYPEPTIDASE"/>
    <property type="match status" value="1"/>
</dbReference>
<dbReference type="Pfam" id="PF00450">
    <property type="entry name" value="Peptidase_S10"/>
    <property type="match status" value="1"/>
</dbReference>
<dbReference type="PRINTS" id="PR00724">
    <property type="entry name" value="CRBOXYPTASEC"/>
</dbReference>
<dbReference type="SUPFAM" id="SSF53474">
    <property type="entry name" value="alpha/beta-Hydrolases"/>
    <property type="match status" value="1"/>
</dbReference>
<dbReference type="PROSITE" id="PS00560">
    <property type="entry name" value="CARBOXYPEPT_SER_HIS"/>
    <property type="match status" value="1"/>
</dbReference>
<dbReference type="PROSITE" id="PS00131">
    <property type="entry name" value="CARBOXYPEPT_SER_SER"/>
    <property type="match status" value="1"/>
</dbReference>
<proteinExistence type="evidence at transcript level"/>
<protein>
    <recommendedName>
        <fullName>Serine carboxypeptidase-like 45</fullName>
        <ecNumber>3.4.16.-</ecNumber>
    </recommendedName>
</protein>
<reference key="1">
    <citation type="journal article" date="2000" name="Nature">
        <title>Sequence and analysis of chromosome 1 of the plant Arabidopsis thaliana.</title>
        <authorList>
            <person name="Theologis A."/>
            <person name="Ecker J.R."/>
            <person name="Palm C.J."/>
            <person name="Federspiel N.A."/>
            <person name="Kaul S."/>
            <person name="White O."/>
            <person name="Alonso J."/>
            <person name="Altafi H."/>
            <person name="Araujo R."/>
            <person name="Bowman C.L."/>
            <person name="Brooks S.Y."/>
            <person name="Buehler E."/>
            <person name="Chan A."/>
            <person name="Chao Q."/>
            <person name="Chen H."/>
            <person name="Cheuk R.F."/>
            <person name="Chin C.W."/>
            <person name="Chung M.K."/>
            <person name="Conn L."/>
            <person name="Conway A.B."/>
            <person name="Conway A.R."/>
            <person name="Creasy T.H."/>
            <person name="Dewar K."/>
            <person name="Dunn P."/>
            <person name="Etgu P."/>
            <person name="Feldblyum T.V."/>
            <person name="Feng J.-D."/>
            <person name="Fong B."/>
            <person name="Fujii C.Y."/>
            <person name="Gill J.E."/>
            <person name="Goldsmith A.D."/>
            <person name="Haas B."/>
            <person name="Hansen N.F."/>
            <person name="Hughes B."/>
            <person name="Huizar L."/>
            <person name="Hunter J.L."/>
            <person name="Jenkins J."/>
            <person name="Johnson-Hopson C."/>
            <person name="Khan S."/>
            <person name="Khaykin E."/>
            <person name="Kim C.J."/>
            <person name="Koo H.L."/>
            <person name="Kremenetskaia I."/>
            <person name="Kurtz D.B."/>
            <person name="Kwan A."/>
            <person name="Lam B."/>
            <person name="Langin-Hooper S."/>
            <person name="Lee A."/>
            <person name="Lee J.M."/>
            <person name="Lenz C.A."/>
            <person name="Li J.H."/>
            <person name="Li Y.-P."/>
            <person name="Lin X."/>
            <person name="Liu S.X."/>
            <person name="Liu Z.A."/>
            <person name="Luros J.S."/>
            <person name="Maiti R."/>
            <person name="Marziali A."/>
            <person name="Militscher J."/>
            <person name="Miranda M."/>
            <person name="Nguyen M."/>
            <person name="Nierman W.C."/>
            <person name="Osborne B.I."/>
            <person name="Pai G."/>
            <person name="Peterson J."/>
            <person name="Pham P.K."/>
            <person name="Rizzo M."/>
            <person name="Rooney T."/>
            <person name="Rowley D."/>
            <person name="Sakano H."/>
            <person name="Salzberg S.L."/>
            <person name="Schwartz J.R."/>
            <person name="Shinn P."/>
            <person name="Southwick A.M."/>
            <person name="Sun H."/>
            <person name="Tallon L.J."/>
            <person name="Tambunga G."/>
            <person name="Toriumi M.J."/>
            <person name="Town C.D."/>
            <person name="Utterback T."/>
            <person name="Van Aken S."/>
            <person name="Vaysberg M."/>
            <person name="Vysotskaia V.S."/>
            <person name="Walker M."/>
            <person name="Wu D."/>
            <person name="Yu G."/>
            <person name="Fraser C.M."/>
            <person name="Venter J.C."/>
            <person name="Davis R.W."/>
        </authorList>
    </citation>
    <scope>NUCLEOTIDE SEQUENCE [LARGE SCALE GENOMIC DNA]</scope>
    <source>
        <strain>cv. Columbia</strain>
    </source>
</reference>
<reference key="2">
    <citation type="journal article" date="2017" name="Plant J.">
        <title>Araport11: a complete reannotation of the Arabidopsis thaliana reference genome.</title>
        <authorList>
            <person name="Cheng C.Y."/>
            <person name="Krishnakumar V."/>
            <person name="Chan A.P."/>
            <person name="Thibaud-Nissen F."/>
            <person name="Schobel S."/>
            <person name="Town C.D."/>
        </authorList>
    </citation>
    <scope>GENOME REANNOTATION</scope>
    <source>
        <strain>cv. Columbia</strain>
    </source>
</reference>
<reference key="3">
    <citation type="journal article" date="2003" name="Science">
        <title>Empirical analysis of transcriptional activity in the Arabidopsis genome.</title>
        <authorList>
            <person name="Yamada K."/>
            <person name="Lim J."/>
            <person name="Dale J.M."/>
            <person name="Chen H."/>
            <person name="Shinn P."/>
            <person name="Palm C.J."/>
            <person name="Southwick A.M."/>
            <person name="Wu H.C."/>
            <person name="Kim C.J."/>
            <person name="Nguyen M."/>
            <person name="Pham P.K."/>
            <person name="Cheuk R.F."/>
            <person name="Karlin-Newmann G."/>
            <person name="Liu S.X."/>
            <person name="Lam B."/>
            <person name="Sakano H."/>
            <person name="Wu T."/>
            <person name="Yu G."/>
            <person name="Miranda M."/>
            <person name="Quach H.L."/>
            <person name="Tripp M."/>
            <person name="Chang C.H."/>
            <person name="Lee J.M."/>
            <person name="Toriumi M.J."/>
            <person name="Chan M.M."/>
            <person name="Tang C.C."/>
            <person name="Onodera C.S."/>
            <person name="Deng J.M."/>
            <person name="Akiyama K."/>
            <person name="Ansari Y."/>
            <person name="Arakawa T."/>
            <person name="Banh J."/>
            <person name="Banno F."/>
            <person name="Bowser L."/>
            <person name="Brooks S.Y."/>
            <person name="Carninci P."/>
            <person name="Chao Q."/>
            <person name="Choy N."/>
            <person name="Enju A."/>
            <person name="Goldsmith A.D."/>
            <person name="Gurjal M."/>
            <person name="Hansen N.F."/>
            <person name="Hayashizaki Y."/>
            <person name="Johnson-Hopson C."/>
            <person name="Hsuan V.W."/>
            <person name="Iida K."/>
            <person name="Karnes M."/>
            <person name="Khan S."/>
            <person name="Koesema E."/>
            <person name="Ishida J."/>
            <person name="Jiang P.X."/>
            <person name="Jones T."/>
            <person name="Kawai J."/>
            <person name="Kamiya A."/>
            <person name="Meyers C."/>
            <person name="Nakajima M."/>
            <person name="Narusaka M."/>
            <person name="Seki M."/>
            <person name="Sakurai T."/>
            <person name="Satou M."/>
            <person name="Tamse R."/>
            <person name="Vaysberg M."/>
            <person name="Wallender E.K."/>
            <person name="Wong C."/>
            <person name="Yamamura Y."/>
            <person name="Yuan S."/>
            <person name="Shinozaki K."/>
            <person name="Davis R.W."/>
            <person name="Theologis A."/>
            <person name="Ecker J.R."/>
        </authorList>
    </citation>
    <scope>NUCLEOTIDE SEQUENCE [LARGE SCALE MRNA]</scope>
    <source>
        <strain>cv. Columbia</strain>
    </source>
</reference>
<reference key="4">
    <citation type="journal article" date="2005" name="Plant Physiol.">
        <title>An expression and bioinformatics analysis of the Arabidopsis serine carboxypeptidase-like gene family.</title>
        <authorList>
            <person name="Fraser C.M."/>
            <person name="Rider L.W."/>
            <person name="Chapple C."/>
        </authorList>
    </citation>
    <scope>GENE FAMILY</scope>
    <scope>TISSUE SPECIFICITY</scope>
    <scope>NOMENCLATURE</scope>
</reference>
<keyword id="KW-0121">Carboxypeptidase</keyword>
<keyword id="KW-1015">Disulfide bond</keyword>
<keyword id="KW-0325">Glycoprotein</keyword>
<keyword id="KW-0378">Hydrolase</keyword>
<keyword id="KW-0645">Protease</keyword>
<keyword id="KW-1185">Reference proteome</keyword>
<keyword id="KW-0964">Secreted</keyword>
<keyword id="KW-0732">Signal</keyword>
<name>SCP45_ARATH</name>